<protein>
    <recommendedName>
        <fullName evidence="1">Acyl carrier protein</fullName>
        <shortName evidence="1">ACP</shortName>
    </recommendedName>
</protein>
<dbReference type="EMBL" id="CP001114">
    <property type="protein sequence ID" value="ACO45412.1"/>
    <property type="molecule type" value="Genomic_DNA"/>
</dbReference>
<dbReference type="RefSeq" id="WP_012692535.1">
    <property type="nucleotide sequence ID" value="NC_012526.1"/>
</dbReference>
<dbReference type="SMR" id="C1D0N8"/>
<dbReference type="STRING" id="546414.Deide_05740"/>
<dbReference type="PaxDb" id="546414-Deide_05740"/>
<dbReference type="KEGG" id="ddr:Deide_05740"/>
<dbReference type="eggNOG" id="COG0236">
    <property type="taxonomic scope" value="Bacteria"/>
</dbReference>
<dbReference type="HOGENOM" id="CLU_108696_5_1_0"/>
<dbReference type="OrthoDB" id="9804551at2"/>
<dbReference type="UniPathway" id="UPA00094"/>
<dbReference type="Proteomes" id="UP000002208">
    <property type="component" value="Chromosome"/>
</dbReference>
<dbReference type="GO" id="GO:0005829">
    <property type="term" value="C:cytosol"/>
    <property type="evidence" value="ECO:0007669"/>
    <property type="project" value="TreeGrafter"/>
</dbReference>
<dbReference type="GO" id="GO:0016020">
    <property type="term" value="C:membrane"/>
    <property type="evidence" value="ECO:0007669"/>
    <property type="project" value="GOC"/>
</dbReference>
<dbReference type="GO" id="GO:0000035">
    <property type="term" value="F:acyl binding"/>
    <property type="evidence" value="ECO:0007669"/>
    <property type="project" value="TreeGrafter"/>
</dbReference>
<dbReference type="GO" id="GO:0000036">
    <property type="term" value="F:acyl carrier activity"/>
    <property type="evidence" value="ECO:0007669"/>
    <property type="project" value="UniProtKB-UniRule"/>
</dbReference>
<dbReference type="GO" id="GO:0009245">
    <property type="term" value="P:lipid A biosynthetic process"/>
    <property type="evidence" value="ECO:0007669"/>
    <property type="project" value="TreeGrafter"/>
</dbReference>
<dbReference type="Gene3D" id="1.10.1200.10">
    <property type="entry name" value="ACP-like"/>
    <property type="match status" value="1"/>
</dbReference>
<dbReference type="HAMAP" id="MF_01217">
    <property type="entry name" value="Acyl_carrier"/>
    <property type="match status" value="1"/>
</dbReference>
<dbReference type="InterPro" id="IPR003231">
    <property type="entry name" value="ACP"/>
</dbReference>
<dbReference type="InterPro" id="IPR036736">
    <property type="entry name" value="ACP-like_sf"/>
</dbReference>
<dbReference type="InterPro" id="IPR009081">
    <property type="entry name" value="PP-bd_ACP"/>
</dbReference>
<dbReference type="InterPro" id="IPR006162">
    <property type="entry name" value="Ppantetheine_attach_site"/>
</dbReference>
<dbReference type="NCBIfam" id="TIGR00517">
    <property type="entry name" value="acyl_carrier"/>
    <property type="match status" value="1"/>
</dbReference>
<dbReference type="NCBIfam" id="NF002148">
    <property type="entry name" value="PRK00982.1-2"/>
    <property type="match status" value="1"/>
</dbReference>
<dbReference type="NCBIfam" id="NF002150">
    <property type="entry name" value="PRK00982.1-4"/>
    <property type="match status" value="1"/>
</dbReference>
<dbReference type="NCBIfam" id="NF002151">
    <property type="entry name" value="PRK00982.1-5"/>
    <property type="match status" value="1"/>
</dbReference>
<dbReference type="PANTHER" id="PTHR20863">
    <property type="entry name" value="ACYL CARRIER PROTEIN"/>
    <property type="match status" value="1"/>
</dbReference>
<dbReference type="PANTHER" id="PTHR20863:SF76">
    <property type="entry name" value="CARRIER DOMAIN-CONTAINING PROTEIN"/>
    <property type="match status" value="1"/>
</dbReference>
<dbReference type="Pfam" id="PF00550">
    <property type="entry name" value="PP-binding"/>
    <property type="match status" value="1"/>
</dbReference>
<dbReference type="SUPFAM" id="SSF47336">
    <property type="entry name" value="ACP-like"/>
    <property type="match status" value="1"/>
</dbReference>
<dbReference type="PROSITE" id="PS50075">
    <property type="entry name" value="CARRIER"/>
    <property type="match status" value="1"/>
</dbReference>
<dbReference type="PROSITE" id="PS00012">
    <property type="entry name" value="PHOSPHOPANTETHEINE"/>
    <property type="match status" value="1"/>
</dbReference>
<sequence length="76" mass="8379">MATFDDVKDVIVDKLGVDGDKVMPEARFVEDLGADSLETVELIMGLEDKFGITISDEDAENIRTVQAAIDYIESKQ</sequence>
<organism>
    <name type="scientific">Deinococcus deserti (strain DSM 17065 / CIP 109153 / LMG 22923 / VCD115)</name>
    <dbReference type="NCBI Taxonomy" id="546414"/>
    <lineage>
        <taxon>Bacteria</taxon>
        <taxon>Thermotogati</taxon>
        <taxon>Deinococcota</taxon>
        <taxon>Deinococci</taxon>
        <taxon>Deinococcales</taxon>
        <taxon>Deinococcaceae</taxon>
        <taxon>Deinococcus</taxon>
    </lineage>
</organism>
<keyword id="KW-0963">Cytoplasm</keyword>
<keyword id="KW-0275">Fatty acid biosynthesis</keyword>
<keyword id="KW-0276">Fatty acid metabolism</keyword>
<keyword id="KW-0444">Lipid biosynthesis</keyword>
<keyword id="KW-0443">Lipid metabolism</keyword>
<keyword id="KW-0596">Phosphopantetheine</keyword>
<keyword id="KW-0597">Phosphoprotein</keyword>
<keyword id="KW-1185">Reference proteome</keyword>
<gene>
    <name evidence="1" type="primary">acpP</name>
    <name type="ordered locus">Deide_05740</name>
</gene>
<proteinExistence type="inferred from homology"/>
<reference key="1">
    <citation type="journal article" date="2009" name="PLoS Genet.">
        <title>Alliance of proteomics and genomics to unravel the specificities of Sahara bacterium Deinococcus deserti.</title>
        <authorList>
            <person name="de Groot A."/>
            <person name="Dulermo R."/>
            <person name="Ortet P."/>
            <person name="Blanchard L."/>
            <person name="Guerin P."/>
            <person name="Fernandez B."/>
            <person name="Vacherie B."/>
            <person name="Dossat C."/>
            <person name="Jolivet E."/>
            <person name="Siguier P."/>
            <person name="Chandler M."/>
            <person name="Barakat M."/>
            <person name="Dedieu A."/>
            <person name="Barbe V."/>
            <person name="Heulin T."/>
            <person name="Sommer S."/>
            <person name="Achouak W."/>
            <person name="Armengaud J."/>
        </authorList>
    </citation>
    <scope>NUCLEOTIDE SEQUENCE [LARGE SCALE GENOMIC DNA]</scope>
    <source>
        <strain>DSM 17065 / CIP 109153 / LMG 22923 / VCD115</strain>
    </source>
</reference>
<feature type="chain" id="PRO_1000213903" description="Acyl carrier protein">
    <location>
        <begin position="1"/>
        <end position="76"/>
    </location>
</feature>
<feature type="domain" description="Carrier" evidence="2">
    <location>
        <begin position="1"/>
        <end position="76"/>
    </location>
</feature>
<feature type="modified residue" description="O-(pantetheine 4'-phosphoryl)serine" evidence="2">
    <location>
        <position position="36"/>
    </location>
</feature>
<name>ACP_DEIDV</name>
<comment type="function">
    <text evidence="1">Carrier of the growing fatty acid chain in fatty acid biosynthesis.</text>
</comment>
<comment type="pathway">
    <text evidence="1">Lipid metabolism; fatty acid biosynthesis.</text>
</comment>
<comment type="subcellular location">
    <subcellularLocation>
        <location evidence="1">Cytoplasm</location>
    </subcellularLocation>
</comment>
<comment type="PTM">
    <text evidence="1">4'-phosphopantetheine is transferred from CoA to a specific serine of apo-ACP by AcpS. This modification is essential for activity because fatty acids are bound in thioester linkage to the sulfhydryl of the prosthetic group.</text>
</comment>
<comment type="similarity">
    <text evidence="1">Belongs to the acyl carrier protein (ACP) family.</text>
</comment>
<evidence type="ECO:0000255" key="1">
    <source>
        <dbReference type="HAMAP-Rule" id="MF_01217"/>
    </source>
</evidence>
<evidence type="ECO:0000255" key="2">
    <source>
        <dbReference type="PROSITE-ProRule" id="PRU00258"/>
    </source>
</evidence>
<accession>C1D0N8</accession>